<evidence type="ECO:0000255" key="1">
    <source>
        <dbReference type="HAMAP-Rule" id="MF_01309"/>
    </source>
</evidence>
<evidence type="ECO:0000305" key="2"/>
<dbReference type="EMBL" id="AE008691">
    <property type="protein sequence ID" value="AAM25429.1"/>
    <property type="molecule type" value="Genomic_DNA"/>
</dbReference>
<dbReference type="RefSeq" id="WP_011026332.1">
    <property type="nucleotide sequence ID" value="NZ_JANUCV010000001.1"/>
</dbReference>
<dbReference type="SMR" id="Q8R7W0"/>
<dbReference type="STRING" id="273068.TTE2286"/>
<dbReference type="KEGG" id="tte:TTE2286"/>
<dbReference type="eggNOG" id="COG0092">
    <property type="taxonomic scope" value="Bacteria"/>
</dbReference>
<dbReference type="HOGENOM" id="CLU_058591_0_2_9"/>
<dbReference type="OrthoDB" id="9806396at2"/>
<dbReference type="Proteomes" id="UP000000555">
    <property type="component" value="Chromosome"/>
</dbReference>
<dbReference type="GO" id="GO:0022627">
    <property type="term" value="C:cytosolic small ribosomal subunit"/>
    <property type="evidence" value="ECO:0007669"/>
    <property type="project" value="TreeGrafter"/>
</dbReference>
<dbReference type="GO" id="GO:0003729">
    <property type="term" value="F:mRNA binding"/>
    <property type="evidence" value="ECO:0007669"/>
    <property type="project" value="UniProtKB-UniRule"/>
</dbReference>
<dbReference type="GO" id="GO:0019843">
    <property type="term" value="F:rRNA binding"/>
    <property type="evidence" value="ECO:0007669"/>
    <property type="project" value="UniProtKB-UniRule"/>
</dbReference>
<dbReference type="GO" id="GO:0003735">
    <property type="term" value="F:structural constituent of ribosome"/>
    <property type="evidence" value="ECO:0007669"/>
    <property type="project" value="InterPro"/>
</dbReference>
<dbReference type="GO" id="GO:0006412">
    <property type="term" value="P:translation"/>
    <property type="evidence" value="ECO:0007669"/>
    <property type="project" value="UniProtKB-UniRule"/>
</dbReference>
<dbReference type="CDD" id="cd02412">
    <property type="entry name" value="KH-II_30S_S3"/>
    <property type="match status" value="1"/>
</dbReference>
<dbReference type="FunFam" id="3.30.1140.32:FF:000002">
    <property type="entry name" value="30S ribosomal protein S3"/>
    <property type="match status" value="1"/>
</dbReference>
<dbReference type="FunFam" id="3.30.300.20:FF:000001">
    <property type="entry name" value="30S ribosomal protein S3"/>
    <property type="match status" value="1"/>
</dbReference>
<dbReference type="Gene3D" id="3.30.300.20">
    <property type="match status" value="1"/>
</dbReference>
<dbReference type="Gene3D" id="3.30.1140.32">
    <property type="entry name" value="Ribosomal protein S3, C-terminal domain"/>
    <property type="match status" value="1"/>
</dbReference>
<dbReference type="HAMAP" id="MF_01309_B">
    <property type="entry name" value="Ribosomal_uS3_B"/>
    <property type="match status" value="1"/>
</dbReference>
<dbReference type="InterPro" id="IPR004087">
    <property type="entry name" value="KH_dom"/>
</dbReference>
<dbReference type="InterPro" id="IPR015946">
    <property type="entry name" value="KH_dom-like_a/b"/>
</dbReference>
<dbReference type="InterPro" id="IPR004044">
    <property type="entry name" value="KH_dom_type_2"/>
</dbReference>
<dbReference type="InterPro" id="IPR009019">
    <property type="entry name" value="KH_sf_prok-type"/>
</dbReference>
<dbReference type="InterPro" id="IPR036419">
    <property type="entry name" value="Ribosomal_S3_C_sf"/>
</dbReference>
<dbReference type="InterPro" id="IPR005704">
    <property type="entry name" value="Ribosomal_uS3_bac-typ"/>
</dbReference>
<dbReference type="InterPro" id="IPR001351">
    <property type="entry name" value="Ribosomal_uS3_C"/>
</dbReference>
<dbReference type="InterPro" id="IPR018280">
    <property type="entry name" value="Ribosomal_uS3_CS"/>
</dbReference>
<dbReference type="NCBIfam" id="TIGR01009">
    <property type="entry name" value="rpsC_bact"/>
    <property type="match status" value="1"/>
</dbReference>
<dbReference type="PANTHER" id="PTHR11760">
    <property type="entry name" value="30S/40S RIBOSOMAL PROTEIN S3"/>
    <property type="match status" value="1"/>
</dbReference>
<dbReference type="PANTHER" id="PTHR11760:SF19">
    <property type="entry name" value="SMALL RIBOSOMAL SUBUNIT PROTEIN US3C"/>
    <property type="match status" value="1"/>
</dbReference>
<dbReference type="Pfam" id="PF07650">
    <property type="entry name" value="KH_2"/>
    <property type="match status" value="1"/>
</dbReference>
<dbReference type="Pfam" id="PF00189">
    <property type="entry name" value="Ribosomal_S3_C"/>
    <property type="match status" value="1"/>
</dbReference>
<dbReference type="SMART" id="SM00322">
    <property type="entry name" value="KH"/>
    <property type="match status" value="1"/>
</dbReference>
<dbReference type="SUPFAM" id="SSF54814">
    <property type="entry name" value="Prokaryotic type KH domain (KH-domain type II)"/>
    <property type="match status" value="1"/>
</dbReference>
<dbReference type="SUPFAM" id="SSF54821">
    <property type="entry name" value="Ribosomal protein S3 C-terminal domain"/>
    <property type="match status" value="1"/>
</dbReference>
<dbReference type="PROSITE" id="PS50823">
    <property type="entry name" value="KH_TYPE_2"/>
    <property type="match status" value="1"/>
</dbReference>
<dbReference type="PROSITE" id="PS00548">
    <property type="entry name" value="RIBOSOMAL_S3"/>
    <property type="match status" value="1"/>
</dbReference>
<accession>Q8R7W0</accession>
<protein>
    <recommendedName>
        <fullName evidence="1">Small ribosomal subunit protein uS3</fullName>
    </recommendedName>
    <alternativeName>
        <fullName evidence="2">30S ribosomal protein S3</fullName>
    </alternativeName>
</protein>
<sequence>MGQKVHPYGLRVGVTKDWLAKWYAKDKDFPNILVEDIKIRNYIKEKLYAAGIPQIVIERASNRIKIDIYAAKPGMVIGKGGTGVDRLREELEKMTNKTVILNIIEVKTPELSAQLVAENIAAQIEKRISYRRAMKQAIARAMKLGAKGIKIACSGRLAGAEIARTERYHEGVVPLQTLRADIDYGFAEANTTYGKIGVKVWINKGEILPQPKKQVTAEGGK</sequence>
<gene>
    <name evidence="1" type="primary">rpsC</name>
    <name type="ordered locus">TTE2286</name>
</gene>
<comment type="function">
    <text evidence="1">Binds the lower part of the 30S subunit head. Binds mRNA in the 70S ribosome, positioning it for translation.</text>
</comment>
<comment type="subunit">
    <text evidence="1">Part of the 30S ribosomal subunit. Forms a tight complex with proteins S10 and S14.</text>
</comment>
<comment type="similarity">
    <text evidence="1">Belongs to the universal ribosomal protein uS3 family.</text>
</comment>
<reference key="1">
    <citation type="journal article" date="2002" name="Genome Res.">
        <title>A complete sequence of the T. tengcongensis genome.</title>
        <authorList>
            <person name="Bao Q."/>
            <person name="Tian Y."/>
            <person name="Li W."/>
            <person name="Xu Z."/>
            <person name="Xuan Z."/>
            <person name="Hu S."/>
            <person name="Dong W."/>
            <person name="Yang J."/>
            <person name="Chen Y."/>
            <person name="Xue Y."/>
            <person name="Xu Y."/>
            <person name="Lai X."/>
            <person name="Huang L."/>
            <person name="Dong X."/>
            <person name="Ma Y."/>
            <person name="Ling L."/>
            <person name="Tan H."/>
            <person name="Chen R."/>
            <person name="Wang J."/>
            <person name="Yu J."/>
            <person name="Yang H."/>
        </authorList>
    </citation>
    <scope>NUCLEOTIDE SEQUENCE [LARGE SCALE GENOMIC DNA]</scope>
    <source>
        <strain>DSM 15242 / JCM 11007 / NBRC 100824 / MB4</strain>
    </source>
</reference>
<keyword id="KW-1185">Reference proteome</keyword>
<keyword id="KW-0687">Ribonucleoprotein</keyword>
<keyword id="KW-0689">Ribosomal protein</keyword>
<keyword id="KW-0694">RNA-binding</keyword>
<keyword id="KW-0699">rRNA-binding</keyword>
<name>RS3_CALS4</name>
<feature type="chain" id="PRO_0000130224" description="Small ribosomal subunit protein uS3">
    <location>
        <begin position="1"/>
        <end position="221"/>
    </location>
</feature>
<feature type="domain" description="KH type-2" evidence="1">
    <location>
        <begin position="39"/>
        <end position="107"/>
    </location>
</feature>
<organism>
    <name type="scientific">Caldanaerobacter subterraneus subsp. tengcongensis (strain DSM 15242 / JCM 11007 / NBRC 100824 / MB4)</name>
    <name type="common">Thermoanaerobacter tengcongensis</name>
    <dbReference type="NCBI Taxonomy" id="273068"/>
    <lineage>
        <taxon>Bacteria</taxon>
        <taxon>Bacillati</taxon>
        <taxon>Bacillota</taxon>
        <taxon>Clostridia</taxon>
        <taxon>Thermoanaerobacterales</taxon>
        <taxon>Thermoanaerobacteraceae</taxon>
        <taxon>Caldanaerobacter</taxon>
    </lineage>
</organism>
<proteinExistence type="inferred from homology"/>